<name>EFG_NEIG2</name>
<dbReference type="EMBL" id="CP001050">
    <property type="protein sequence ID" value="ACF31032.1"/>
    <property type="molecule type" value="Genomic_DNA"/>
</dbReference>
<dbReference type="RefSeq" id="WP_003690097.1">
    <property type="nucleotide sequence ID" value="NC_011035.1"/>
</dbReference>
<dbReference type="SMR" id="B4RQX2"/>
<dbReference type="GeneID" id="66754290"/>
<dbReference type="KEGG" id="ngk:NGK_2430"/>
<dbReference type="HOGENOM" id="CLU_002794_4_1_4"/>
<dbReference type="Proteomes" id="UP000002564">
    <property type="component" value="Chromosome"/>
</dbReference>
<dbReference type="GO" id="GO:0005737">
    <property type="term" value="C:cytoplasm"/>
    <property type="evidence" value="ECO:0007669"/>
    <property type="project" value="UniProtKB-SubCell"/>
</dbReference>
<dbReference type="GO" id="GO:0005525">
    <property type="term" value="F:GTP binding"/>
    <property type="evidence" value="ECO:0007669"/>
    <property type="project" value="UniProtKB-UniRule"/>
</dbReference>
<dbReference type="GO" id="GO:0003924">
    <property type="term" value="F:GTPase activity"/>
    <property type="evidence" value="ECO:0007669"/>
    <property type="project" value="InterPro"/>
</dbReference>
<dbReference type="GO" id="GO:0097216">
    <property type="term" value="F:guanosine tetraphosphate binding"/>
    <property type="evidence" value="ECO:0007669"/>
    <property type="project" value="UniProtKB-ARBA"/>
</dbReference>
<dbReference type="GO" id="GO:0003746">
    <property type="term" value="F:translation elongation factor activity"/>
    <property type="evidence" value="ECO:0007669"/>
    <property type="project" value="UniProtKB-UniRule"/>
</dbReference>
<dbReference type="GO" id="GO:0032790">
    <property type="term" value="P:ribosome disassembly"/>
    <property type="evidence" value="ECO:0007669"/>
    <property type="project" value="TreeGrafter"/>
</dbReference>
<dbReference type="CDD" id="cd01886">
    <property type="entry name" value="EF-G"/>
    <property type="match status" value="1"/>
</dbReference>
<dbReference type="CDD" id="cd16262">
    <property type="entry name" value="EFG_III"/>
    <property type="match status" value="1"/>
</dbReference>
<dbReference type="CDD" id="cd01434">
    <property type="entry name" value="EFG_mtEFG1_IV"/>
    <property type="match status" value="1"/>
</dbReference>
<dbReference type="CDD" id="cd03713">
    <property type="entry name" value="EFG_mtEFG_C"/>
    <property type="match status" value="1"/>
</dbReference>
<dbReference type="CDD" id="cd04088">
    <property type="entry name" value="EFG_mtEFG_II"/>
    <property type="match status" value="1"/>
</dbReference>
<dbReference type="FunFam" id="2.40.30.10:FF:000006">
    <property type="entry name" value="Elongation factor G"/>
    <property type="match status" value="1"/>
</dbReference>
<dbReference type="FunFam" id="3.30.230.10:FF:000003">
    <property type="entry name" value="Elongation factor G"/>
    <property type="match status" value="1"/>
</dbReference>
<dbReference type="FunFam" id="3.30.70.240:FF:000001">
    <property type="entry name" value="Elongation factor G"/>
    <property type="match status" value="1"/>
</dbReference>
<dbReference type="FunFam" id="3.30.70.870:FF:000001">
    <property type="entry name" value="Elongation factor G"/>
    <property type="match status" value="1"/>
</dbReference>
<dbReference type="FunFam" id="3.40.50.300:FF:000029">
    <property type="entry name" value="Elongation factor G"/>
    <property type="match status" value="1"/>
</dbReference>
<dbReference type="Gene3D" id="3.30.230.10">
    <property type="match status" value="1"/>
</dbReference>
<dbReference type="Gene3D" id="3.30.70.240">
    <property type="match status" value="1"/>
</dbReference>
<dbReference type="Gene3D" id="3.30.70.870">
    <property type="entry name" value="Elongation Factor G (Translational Gtpase), domain 3"/>
    <property type="match status" value="1"/>
</dbReference>
<dbReference type="Gene3D" id="3.40.50.300">
    <property type="entry name" value="P-loop containing nucleotide triphosphate hydrolases"/>
    <property type="match status" value="1"/>
</dbReference>
<dbReference type="Gene3D" id="2.40.30.10">
    <property type="entry name" value="Translation factors"/>
    <property type="match status" value="1"/>
</dbReference>
<dbReference type="HAMAP" id="MF_00054_B">
    <property type="entry name" value="EF_G_EF_2_B"/>
    <property type="match status" value="1"/>
</dbReference>
<dbReference type="InterPro" id="IPR041095">
    <property type="entry name" value="EFG_II"/>
</dbReference>
<dbReference type="InterPro" id="IPR009022">
    <property type="entry name" value="EFG_III"/>
</dbReference>
<dbReference type="InterPro" id="IPR035647">
    <property type="entry name" value="EFG_III/V"/>
</dbReference>
<dbReference type="InterPro" id="IPR047872">
    <property type="entry name" value="EFG_IV"/>
</dbReference>
<dbReference type="InterPro" id="IPR035649">
    <property type="entry name" value="EFG_V"/>
</dbReference>
<dbReference type="InterPro" id="IPR000640">
    <property type="entry name" value="EFG_V-like"/>
</dbReference>
<dbReference type="InterPro" id="IPR004161">
    <property type="entry name" value="EFTu-like_2"/>
</dbReference>
<dbReference type="InterPro" id="IPR031157">
    <property type="entry name" value="G_TR_CS"/>
</dbReference>
<dbReference type="InterPro" id="IPR027417">
    <property type="entry name" value="P-loop_NTPase"/>
</dbReference>
<dbReference type="InterPro" id="IPR020568">
    <property type="entry name" value="Ribosomal_Su5_D2-typ_SF"/>
</dbReference>
<dbReference type="InterPro" id="IPR014721">
    <property type="entry name" value="Ribsml_uS5_D2-typ_fold_subgr"/>
</dbReference>
<dbReference type="InterPro" id="IPR005225">
    <property type="entry name" value="Small_GTP-bd"/>
</dbReference>
<dbReference type="InterPro" id="IPR000795">
    <property type="entry name" value="T_Tr_GTP-bd_dom"/>
</dbReference>
<dbReference type="InterPro" id="IPR009000">
    <property type="entry name" value="Transl_B-barrel_sf"/>
</dbReference>
<dbReference type="InterPro" id="IPR004540">
    <property type="entry name" value="Transl_elong_EFG/EF2"/>
</dbReference>
<dbReference type="InterPro" id="IPR005517">
    <property type="entry name" value="Transl_elong_EFG/EF2_IV"/>
</dbReference>
<dbReference type="NCBIfam" id="TIGR00484">
    <property type="entry name" value="EF-G"/>
    <property type="match status" value="1"/>
</dbReference>
<dbReference type="NCBIfam" id="NF009381">
    <property type="entry name" value="PRK12740.1-5"/>
    <property type="match status" value="1"/>
</dbReference>
<dbReference type="NCBIfam" id="TIGR00231">
    <property type="entry name" value="small_GTP"/>
    <property type="match status" value="1"/>
</dbReference>
<dbReference type="PANTHER" id="PTHR43261:SF1">
    <property type="entry name" value="RIBOSOME-RELEASING FACTOR 2, MITOCHONDRIAL"/>
    <property type="match status" value="1"/>
</dbReference>
<dbReference type="PANTHER" id="PTHR43261">
    <property type="entry name" value="TRANSLATION ELONGATION FACTOR G-RELATED"/>
    <property type="match status" value="1"/>
</dbReference>
<dbReference type="Pfam" id="PF00679">
    <property type="entry name" value="EFG_C"/>
    <property type="match status" value="1"/>
</dbReference>
<dbReference type="Pfam" id="PF14492">
    <property type="entry name" value="EFG_III"/>
    <property type="match status" value="1"/>
</dbReference>
<dbReference type="Pfam" id="PF03764">
    <property type="entry name" value="EFG_IV"/>
    <property type="match status" value="1"/>
</dbReference>
<dbReference type="Pfam" id="PF00009">
    <property type="entry name" value="GTP_EFTU"/>
    <property type="match status" value="1"/>
</dbReference>
<dbReference type="Pfam" id="PF03144">
    <property type="entry name" value="GTP_EFTU_D2"/>
    <property type="match status" value="1"/>
</dbReference>
<dbReference type="PRINTS" id="PR00315">
    <property type="entry name" value="ELONGATNFCT"/>
</dbReference>
<dbReference type="SMART" id="SM00838">
    <property type="entry name" value="EFG_C"/>
    <property type="match status" value="1"/>
</dbReference>
<dbReference type="SMART" id="SM00889">
    <property type="entry name" value="EFG_IV"/>
    <property type="match status" value="1"/>
</dbReference>
<dbReference type="SUPFAM" id="SSF54980">
    <property type="entry name" value="EF-G C-terminal domain-like"/>
    <property type="match status" value="2"/>
</dbReference>
<dbReference type="SUPFAM" id="SSF52540">
    <property type="entry name" value="P-loop containing nucleoside triphosphate hydrolases"/>
    <property type="match status" value="1"/>
</dbReference>
<dbReference type="SUPFAM" id="SSF54211">
    <property type="entry name" value="Ribosomal protein S5 domain 2-like"/>
    <property type="match status" value="1"/>
</dbReference>
<dbReference type="SUPFAM" id="SSF50447">
    <property type="entry name" value="Translation proteins"/>
    <property type="match status" value="1"/>
</dbReference>
<dbReference type="PROSITE" id="PS00301">
    <property type="entry name" value="G_TR_1"/>
    <property type="match status" value="1"/>
</dbReference>
<dbReference type="PROSITE" id="PS51722">
    <property type="entry name" value="G_TR_2"/>
    <property type="match status" value="1"/>
</dbReference>
<evidence type="ECO:0000255" key="1">
    <source>
        <dbReference type="HAMAP-Rule" id="MF_00054"/>
    </source>
</evidence>
<reference key="1">
    <citation type="journal article" date="2008" name="J. Bacteriol.">
        <title>Complete genome sequence of Neisseria gonorrhoeae NCCP11945.</title>
        <authorList>
            <person name="Chung G.T."/>
            <person name="Yoo J.S."/>
            <person name="Oh H.B."/>
            <person name="Lee Y.S."/>
            <person name="Cha S.H."/>
            <person name="Kim S.J."/>
            <person name="Yoo C.K."/>
        </authorList>
    </citation>
    <scope>NUCLEOTIDE SEQUENCE [LARGE SCALE GENOMIC DNA]</scope>
    <source>
        <strain>NCCP11945</strain>
    </source>
</reference>
<sequence length="701" mass="77173">MARKTPISLYRNIGISAHIDAGKTTTTERILFYTGLTHKLGEVHDGAATTDYMEQEQERGITITSAAVTSYWSGMAKQFPEHRFNIIDTPGHVDFTVEVERSMRVLDGAVMVYCAVGGVQPQSETVWRQANKYQVPRLAFVNKMDRQGANFFRVVEQMKTRLRANPVPIVIPVGAEDSFTGVVDLLKMKSIIWNEADKGTTFTYGDIPAELVETAEEWRQNMIEAAAEASEELMDKYLGGEDLAEEEIVGALRQRTLAGEIQPMLCGSAFKNKGVQRMLDAVVELLPAPTDIPPVQGVNPNTEEADSRQASDEEKFSALAFKMLNDKYVGQLTFIRVYSGVVKSGDTVLNSVKGTRERIGRLVQMTAADRTEIEEVRAGDIAAAIGLKDVTTGETLCAESAPIILERMEFPEPVIHIAVEPKTKADQEKMGIALNRLAKEDPSFRVRTDEESGQTIISGMGELHLEIIVDRMKREFGVEANIGAPQVAYRETIRKAVKAEYKHAKQSGGKGQYGHVVIEMEPMEPGGEGYEFIDEIKGGVIPREFIPSVDKGIRDTLPNGIVAGYPVVDVRIRLVFGSYHDVDSSQLAFELAASQAFKEGMRQASPALLEPIMAVEVETPEEYMGDVMGDLNRRRGVVLGMDDDGIGGKKVRAEVPLAEMFGYSTDLRSATQGRATYSMEFKKYSEAPAHIAAAVTEARKG</sequence>
<organism>
    <name type="scientific">Neisseria gonorrhoeae (strain NCCP11945)</name>
    <dbReference type="NCBI Taxonomy" id="521006"/>
    <lineage>
        <taxon>Bacteria</taxon>
        <taxon>Pseudomonadati</taxon>
        <taxon>Pseudomonadota</taxon>
        <taxon>Betaproteobacteria</taxon>
        <taxon>Neisseriales</taxon>
        <taxon>Neisseriaceae</taxon>
        <taxon>Neisseria</taxon>
    </lineage>
</organism>
<gene>
    <name evidence="1" type="primary">fusA</name>
    <name type="ordered locus">NGK_2430</name>
</gene>
<protein>
    <recommendedName>
        <fullName evidence="1">Elongation factor G</fullName>
        <shortName evidence="1">EF-G</shortName>
    </recommendedName>
</protein>
<comment type="function">
    <text evidence="1">Catalyzes the GTP-dependent ribosomal translocation step during translation elongation. During this step, the ribosome changes from the pre-translocational (PRE) to the post-translocational (POST) state as the newly formed A-site-bound peptidyl-tRNA and P-site-bound deacylated tRNA move to the P and E sites, respectively. Catalyzes the coordinated movement of the two tRNA molecules, the mRNA and conformational changes in the ribosome.</text>
</comment>
<comment type="subcellular location">
    <subcellularLocation>
        <location evidence="1">Cytoplasm</location>
    </subcellularLocation>
</comment>
<comment type="similarity">
    <text evidence="1">Belongs to the TRAFAC class translation factor GTPase superfamily. Classic translation factor GTPase family. EF-G/EF-2 subfamily.</text>
</comment>
<proteinExistence type="inferred from homology"/>
<accession>B4RQX2</accession>
<feature type="chain" id="PRO_1000091740" description="Elongation factor G">
    <location>
        <begin position="1"/>
        <end position="701"/>
    </location>
</feature>
<feature type="domain" description="tr-type G">
    <location>
        <begin position="8"/>
        <end position="290"/>
    </location>
</feature>
<feature type="binding site" evidence="1">
    <location>
        <begin position="17"/>
        <end position="24"/>
    </location>
    <ligand>
        <name>GTP</name>
        <dbReference type="ChEBI" id="CHEBI:37565"/>
    </ligand>
</feature>
<feature type="binding site" evidence="1">
    <location>
        <begin position="88"/>
        <end position="92"/>
    </location>
    <ligand>
        <name>GTP</name>
        <dbReference type="ChEBI" id="CHEBI:37565"/>
    </ligand>
</feature>
<feature type="binding site" evidence="1">
    <location>
        <begin position="142"/>
        <end position="145"/>
    </location>
    <ligand>
        <name>GTP</name>
        <dbReference type="ChEBI" id="CHEBI:37565"/>
    </ligand>
</feature>
<keyword id="KW-0963">Cytoplasm</keyword>
<keyword id="KW-0251">Elongation factor</keyword>
<keyword id="KW-0342">GTP-binding</keyword>
<keyword id="KW-0547">Nucleotide-binding</keyword>
<keyword id="KW-0648">Protein biosynthesis</keyword>